<dbReference type="EMBL" id="AE008917">
    <property type="protein sequence ID" value="AAL51350.1"/>
    <property type="status" value="ALT_INIT"/>
    <property type="molecule type" value="Genomic_DNA"/>
</dbReference>
<dbReference type="PIR" id="AC3273">
    <property type="entry name" value="AC3273"/>
</dbReference>
<dbReference type="RefSeq" id="WP_005970682.1">
    <property type="nucleotide sequence ID" value="NC_003317.1"/>
</dbReference>
<dbReference type="SMR" id="Q8YJB8"/>
<dbReference type="GeneID" id="29593885"/>
<dbReference type="KEGG" id="bme:BMEI0168"/>
<dbReference type="KEGG" id="bmel:DK63_1268"/>
<dbReference type="PATRIC" id="fig|224914.52.peg.1336"/>
<dbReference type="eggNOG" id="COG1674">
    <property type="taxonomic scope" value="Bacteria"/>
</dbReference>
<dbReference type="Proteomes" id="UP000000419">
    <property type="component" value="Chromosome I"/>
</dbReference>
<dbReference type="GO" id="GO:0005886">
    <property type="term" value="C:plasma membrane"/>
    <property type="evidence" value="ECO:0007669"/>
    <property type="project" value="UniProtKB-SubCell"/>
</dbReference>
<dbReference type="GO" id="GO:0005524">
    <property type="term" value="F:ATP binding"/>
    <property type="evidence" value="ECO:0007669"/>
    <property type="project" value="UniProtKB-KW"/>
</dbReference>
<dbReference type="GO" id="GO:0016887">
    <property type="term" value="F:ATP hydrolysis activity"/>
    <property type="evidence" value="ECO:0007669"/>
    <property type="project" value="InterPro"/>
</dbReference>
<dbReference type="GO" id="GO:0003677">
    <property type="term" value="F:DNA binding"/>
    <property type="evidence" value="ECO:0007669"/>
    <property type="project" value="UniProtKB-KW"/>
</dbReference>
<dbReference type="GO" id="GO:0051301">
    <property type="term" value="P:cell division"/>
    <property type="evidence" value="ECO:0007669"/>
    <property type="project" value="UniProtKB-KW"/>
</dbReference>
<dbReference type="GO" id="GO:0007059">
    <property type="term" value="P:chromosome segregation"/>
    <property type="evidence" value="ECO:0007669"/>
    <property type="project" value="UniProtKB-KW"/>
</dbReference>
<dbReference type="CDD" id="cd01127">
    <property type="entry name" value="TrwB_TraG_TraD_VirD4"/>
    <property type="match status" value="1"/>
</dbReference>
<dbReference type="Gene3D" id="3.30.980.40">
    <property type="match status" value="1"/>
</dbReference>
<dbReference type="Gene3D" id="3.40.50.300">
    <property type="entry name" value="P-loop containing nucleotide triphosphate hydrolases"/>
    <property type="match status" value="1"/>
</dbReference>
<dbReference type="Gene3D" id="1.10.10.10">
    <property type="entry name" value="Winged helix-like DNA-binding domain superfamily/Winged helix DNA-binding domain"/>
    <property type="match status" value="1"/>
</dbReference>
<dbReference type="InterPro" id="IPR003593">
    <property type="entry name" value="AAA+_ATPase"/>
</dbReference>
<dbReference type="InterPro" id="IPR050206">
    <property type="entry name" value="FtsK/SpoIIIE/SftA"/>
</dbReference>
<dbReference type="InterPro" id="IPR025199">
    <property type="entry name" value="FtsK_4TM"/>
</dbReference>
<dbReference type="InterPro" id="IPR041027">
    <property type="entry name" value="FtsK_alpha"/>
</dbReference>
<dbReference type="InterPro" id="IPR002543">
    <property type="entry name" value="FtsK_dom"/>
</dbReference>
<dbReference type="InterPro" id="IPR018541">
    <property type="entry name" value="Ftsk_gamma"/>
</dbReference>
<dbReference type="InterPro" id="IPR027417">
    <property type="entry name" value="P-loop_NTPase"/>
</dbReference>
<dbReference type="InterPro" id="IPR036388">
    <property type="entry name" value="WH-like_DNA-bd_sf"/>
</dbReference>
<dbReference type="InterPro" id="IPR036390">
    <property type="entry name" value="WH_DNA-bd_sf"/>
</dbReference>
<dbReference type="PANTHER" id="PTHR22683:SF41">
    <property type="entry name" value="DNA TRANSLOCASE FTSK"/>
    <property type="match status" value="1"/>
</dbReference>
<dbReference type="PANTHER" id="PTHR22683">
    <property type="entry name" value="SPORULATION PROTEIN RELATED"/>
    <property type="match status" value="1"/>
</dbReference>
<dbReference type="Pfam" id="PF13491">
    <property type="entry name" value="FtsK_4TM"/>
    <property type="match status" value="1"/>
</dbReference>
<dbReference type="Pfam" id="PF17854">
    <property type="entry name" value="FtsK_alpha"/>
    <property type="match status" value="1"/>
</dbReference>
<dbReference type="Pfam" id="PF09397">
    <property type="entry name" value="FtsK_gamma"/>
    <property type="match status" value="1"/>
</dbReference>
<dbReference type="Pfam" id="PF01580">
    <property type="entry name" value="FtsK_SpoIIIE"/>
    <property type="match status" value="1"/>
</dbReference>
<dbReference type="SMART" id="SM00382">
    <property type="entry name" value="AAA"/>
    <property type="match status" value="1"/>
</dbReference>
<dbReference type="SMART" id="SM00843">
    <property type="entry name" value="Ftsk_gamma"/>
    <property type="match status" value="1"/>
</dbReference>
<dbReference type="SUPFAM" id="SSF52540">
    <property type="entry name" value="P-loop containing nucleoside triphosphate hydrolases"/>
    <property type="match status" value="1"/>
</dbReference>
<dbReference type="SUPFAM" id="SSF46785">
    <property type="entry name" value="Winged helix' DNA-binding domain"/>
    <property type="match status" value="1"/>
</dbReference>
<dbReference type="PROSITE" id="PS50901">
    <property type="entry name" value="FTSK"/>
    <property type="match status" value="1"/>
</dbReference>
<protein>
    <recommendedName>
        <fullName>DNA translocase FtsK</fullName>
    </recommendedName>
</protein>
<name>FTSK_BRUME</name>
<proteinExistence type="inferred from homology"/>
<reference key="1">
    <citation type="journal article" date="2002" name="Proc. Natl. Acad. Sci. U.S.A.">
        <title>The genome sequence of the facultative intracellular pathogen Brucella melitensis.</title>
        <authorList>
            <person name="DelVecchio V.G."/>
            <person name="Kapatral V."/>
            <person name="Redkar R.J."/>
            <person name="Patra G."/>
            <person name="Mujer C."/>
            <person name="Los T."/>
            <person name="Ivanova N."/>
            <person name="Anderson I."/>
            <person name="Bhattacharyya A."/>
            <person name="Lykidis A."/>
            <person name="Reznik G."/>
            <person name="Jablonski L."/>
            <person name="Larsen N."/>
            <person name="D'Souza M."/>
            <person name="Bernal A."/>
            <person name="Mazur M."/>
            <person name="Goltsman E."/>
            <person name="Selkov E."/>
            <person name="Elzer P.H."/>
            <person name="Hagius S."/>
            <person name="O'Callaghan D."/>
            <person name="Letesson J.-J."/>
            <person name="Haselkorn R."/>
            <person name="Kyrpides N.C."/>
            <person name="Overbeek R."/>
        </authorList>
    </citation>
    <scope>NUCLEOTIDE SEQUENCE [LARGE SCALE GENOMIC DNA]</scope>
    <source>
        <strain>ATCC 23456 / CCUG 17765 / NCTC 10094 / 16M</strain>
    </source>
</reference>
<keyword id="KW-0067">ATP-binding</keyword>
<keyword id="KW-0131">Cell cycle</keyword>
<keyword id="KW-0132">Cell division</keyword>
<keyword id="KW-0997">Cell inner membrane</keyword>
<keyword id="KW-1003">Cell membrane</keyword>
<keyword id="KW-0159">Chromosome partition</keyword>
<keyword id="KW-0238">DNA-binding</keyword>
<keyword id="KW-0472">Membrane</keyword>
<keyword id="KW-0547">Nucleotide-binding</keyword>
<keyword id="KW-0812">Transmembrane</keyword>
<keyword id="KW-1133">Transmembrane helix</keyword>
<sequence length="817" mass="88806">MRQGYSPSYPLRDERITEDRLRFANLVRRQVYILLGLGLLSLTAMAVGALATWNVADPSFSHATDNPVTNALGYPGAVFSDLAMQFFGLASVPALLPLAVWSLLLMIRGYIGRIARRSLAWVGAALLFAAIASCFAVPQSWPMPIGLGGVFGDMLLRIPGFFLGGFPQGAIASAIALVLAFPALWFCFFASGIIGRGAEAVNPAMLSANRSADDEFADEDADNEAGGGFHFIGALTHLVLMTTATIRRMTGLGRRRSREDDFDDMRMVRRSAETRNAPPPRARKARVEQTAPSPKPGPRAQREAQPSFLKDNGIFEMPSLHFLAEPKLVQRDPALSKDALEQNARLLAGVLEDFGVRGEIINVKPGPVVTLYELEPAPGIKSSRVIGLADDIARSMSAIAARVAVIPGRNAIGIELPNPKREMVYLREMLASRDFEQSKAKLALALGKTINGEPVIADIAKMPHVLVAGTTGSGKSVAINTMILSLLYRMTPQECRLIMIDPKMLELSVYDGIPHLLTPVVTDPKKAVVALKWTVREMEDRYRKMSKVGVRNIDGFNQRVGLAQKKGEPIARTVQTGFDRNTGEAIYETEELDLEPMPYIVVIIDEMADLMMVAGKDIEGAVQRLAQMARAAGIHVIMATQRPSVDVITGTIKANFPTRISFQVTSKIDSRTILGEQGAEQLLGQGDMLFMAGGGRIQRVHGPFVGDDEVERIVQHLKLQGVPEYLDAITEDEDDDEGGSGPAGTGNLEDSDDPYDQAVAVVLRDKKASTSYIQRRLGIGYNRAASIIERMEDEGIVGPANHAGKREILVPTGDDDF</sequence>
<evidence type="ECO:0000250" key="1"/>
<evidence type="ECO:0000255" key="2"/>
<evidence type="ECO:0000255" key="3">
    <source>
        <dbReference type="PROSITE-ProRule" id="PRU00289"/>
    </source>
</evidence>
<evidence type="ECO:0000256" key="4">
    <source>
        <dbReference type="SAM" id="MobiDB-lite"/>
    </source>
</evidence>
<evidence type="ECO:0000305" key="5"/>
<accession>Q8YJB8</accession>
<organism>
    <name type="scientific">Brucella melitensis biotype 1 (strain ATCC 23456 / CCUG 17765 / NCTC 10094 / 16M)</name>
    <dbReference type="NCBI Taxonomy" id="224914"/>
    <lineage>
        <taxon>Bacteria</taxon>
        <taxon>Pseudomonadati</taxon>
        <taxon>Pseudomonadota</taxon>
        <taxon>Alphaproteobacteria</taxon>
        <taxon>Hyphomicrobiales</taxon>
        <taxon>Brucellaceae</taxon>
        <taxon>Brucella/Ochrobactrum group</taxon>
        <taxon>Brucella</taxon>
    </lineage>
</organism>
<gene>
    <name type="primary">ftsK</name>
    <name type="ordered locus">BMEI0168</name>
</gene>
<feature type="chain" id="PRO_0000098243" description="DNA translocase FtsK">
    <location>
        <begin position="1"/>
        <end position="817"/>
    </location>
</feature>
<feature type="transmembrane region" description="Helical" evidence="2">
    <location>
        <begin position="31"/>
        <end position="51"/>
    </location>
</feature>
<feature type="transmembrane region" description="Helical" evidence="2">
    <location>
        <begin position="87"/>
        <end position="107"/>
    </location>
</feature>
<feature type="transmembrane region" description="Helical" evidence="2">
    <location>
        <begin position="118"/>
        <end position="138"/>
    </location>
</feature>
<feature type="transmembrane region" description="Helical" evidence="2">
    <location>
        <begin position="145"/>
        <end position="165"/>
    </location>
</feature>
<feature type="transmembrane region" description="Helical" evidence="2">
    <location>
        <begin position="174"/>
        <end position="194"/>
    </location>
</feature>
<feature type="transmembrane region" description="Helical" evidence="2">
    <location>
        <begin position="226"/>
        <end position="246"/>
    </location>
</feature>
<feature type="topological domain" description="Cytoplasmic" evidence="2">
    <location>
        <begin position="247"/>
        <end position="817"/>
    </location>
</feature>
<feature type="domain" description="FtsK" evidence="3">
    <location>
        <begin position="452"/>
        <end position="671"/>
    </location>
</feature>
<feature type="region of interest" description="Disordered" evidence="4">
    <location>
        <begin position="252"/>
        <end position="304"/>
    </location>
</feature>
<feature type="region of interest" description="Disordered" evidence="4">
    <location>
        <begin position="731"/>
        <end position="753"/>
    </location>
</feature>
<feature type="compositionally biased region" description="Basic and acidic residues" evidence="4">
    <location>
        <begin position="264"/>
        <end position="273"/>
    </location>
</feature>
<feature type="binding site" evidence="3">
    <location>
        <begin position="472"/>
        <end position="477"/>
    </location>
    <ligand>
        <name>ATP</name>
        <dbReference type="ChEBI" id="CHEBI:30616"/>
    </ligand>
</feature>
<comment type="function">
    <text evidence="1">Essential cell division protein that coordinates cell division and chromosome segregation. The N-terminus is involved in assembly of the cell-division machinery. The C-terminus functions as a DNA motor that moves dsDNA in an ATP-dependent manner towards the dif recombination site, which is located within the replication terminus region. Translocation stops specifically at Xer-dif sites, where FtsK interacts with the Xer recombinase, allowing activation of chromosome unlinking by recombination. FtsK orienting polar sequences (KOPS) guide the direction of DNA translocation. FtsK can remove proteins from DNA as it translocates, but translocation stops specifically at XerCD-dif site, thereby preventing removal of XerC and XerD from dif (By similarity).</text>
</comment>
<comment type="subunit">
    <text evidence="1">Homohexamer. Forms a ring that surrounds DNA (By similarity).</text>
</comment>
<comment type="subcellular location">
    <subcellularLocation>
        <location evidence="1">Cell inner membrane</location>
        <topology evidence="1">Multi-pass membrane protein</topology>
    </subcellularLocation>
    <text evidence="1">Located at the septum.</text>
</comment>
<comment type="domain">
    <text evidence="1">Consists of an N-terminal domain, which is sufficient for the localization to the septal ring and is required for cell division, followed by a linker domain, and a C-terminal domain, which forms the translocation motor involved in chromosome segregation. The C-terminal domain can be further subdivided into alpha, beta and gamma subdomains. The alpha and beta subdomains multimerise to produce a hexameric ring, contain the nucleotide binding motif and form the DNA pump. The gamma subdomain is a regulatory subdomain that controls translocation of DNA by recognition of KOPS motifs and interacts with XerD recombinase (By similarity).</text>
</comment>
<comment type="similarity">
    <text evidence="5">Belongs to the FtsK/SpoIIIE/SftA family.</text>
</comment>
<comment type="sequence caution" evidence="5">
    <conflict type="erroneous initiation">
        <sequence resource="EMBL-CDS" id="AAL51350"/>
    </conflict>
    <text>Truncated N-terminus.</text>
</comment>